<dbReference type="EC" id="1.17.1.8" evidence="1"/>
<dbReference type="EMBL" id="CT978603">
    <property type="protein sequence ID" value="CAK27874.1"/>
    <property type="molecule type" value="Genomic_DNA"/>
</dbReference>
<dbReference type="SMR" id="A5GSL5"/>
<dbReference type="STRING" id="316278.SynRCC307_0971"/>
<dbReference type="KEGG" id="syr:SynRCC307_0971"/>
<dbReference type="eggNOG" id="COG0289">
    <property type="taxonomic scope" value="Bacteria"/>
</dbReference>
<dbReference type="HOGENOM" id="CLU_047479_0_0_3"/>
<dbReference type="OrthoDB" id="9790352at2"/>
<dbReference type="UniPathway" id="UPA00034">
    <property type="reaction ID" value="UER00018"/>
</dbReference>
<dbReference type="Proteomes" id="UP000001115">
    <property type="component" value="Chromosome"/>
</dbReference>
<dbReference type="GO" id="GO:0005829">
    <property type="term" value="C:cytosol"/>
    <property type="evidence" value="ECO:0007669"/>
    <property type="project" value="TreeGrafter"/>
</dbReference>
<dbReference type="GO" id="GO:0008839">
    <property type="term" value="F:4-hydroxy-tetrahydrodipicolinate reductase"/>
    <property type="evidence" value="ECO:0007669"/>
    <property type="project" value="UniProtKB-EC"/>
</dbReference>
<dbReference type="GO" id="GO:0051287">
    <property type="term" value="F:NAD binding"/>
    <property type="evidence" value="ECO:0007669"/>
    <property type="project" value="UniProtKB-UniRule"/>
</dbReference>
<dbReference type="GO" id="GO:0050661">
    <property type="term" value="F:NADP binding"/>
    <property type="evidence" value="ECO:0007669"/>
    <property type="project" value="UniProtKB-UniRule"/>
</dbReference>
<dbReference type="GO" id="GO:0016726">
    <property type="term" value="F:oxidoreductase activity, acting on CH or CH2 groups, NAD or NADP as acceptor"/>
    <property type="evidence" value="ECO:0007669"/>
    <property type="project" value="UniProtKB-UniRule"/>
</dbReference>
<dbReference type="GO" id="GO:0019877">
    <property type="term" value="P:diaminopimelate biosynthetic process"/>
    <property type="evidence" value="ECO:0007669"/>
    <property type="project" value="UniProtKB-UniRule"/>
</dbReference>
<dbReference type="GO" id="GO:0009089">
    <property type="term" value="P:lysine biosynthetic process via diaminopimelate"/>
    <property type="evidence" value="ECO:0007669"/>
    <property type="project" value="UniProtKB-UniRule"/>
</dbReference>
<dbReference type="CDD" id="cd02274">
    <property type="entry name" value="DHDPR_N"/>
    <property type="match status" value="1"/>
</dbReference>
<dbReference type="FunFam" id="3.30.360.10:FF:000009">
    <property type="entry name" value="4-hydroxy-tetrahydrodipicolinate reductase"/>
    <property type="match status" value="1"/>
</dbReference>
<dbReference type="Gene3D" id="3.30.360.10">
    <property type="entry name" value="Dihydrodipicolinate Reductase, domain 2"/>
    <property type="match status" value="1"/>
</dbReference>
<dbReference type="Gene3D" id="3.40.50.720">
    <property type="entry name" value="NAD(P)-binding Rossmann-like Domain"/>
    <property type="match status" value="1"/>
</dbReference>
<dbReference type="HAMAP" id="MF_00102">
    <property type="entry name" value="DapB"/>
    <property type="match status" value="1"/>
</dbReference>
<dbReference type="InterPro" id="IPR022663">
    <property type="entry name" value="DapB_C"/>
</dbReference>
<dbReference type="InterPro" id="IPR000846">
    <property type="entry name" value="DapB_N"/>
</dbReference>
<dbReference type="InterPro" id="IPR022664">
    <property type="entry name" value="DapB_N_CS"/>
</dbReference>
<dbReference type="InterPro" id="IPR023940">
    <property type="entry name" value="DHDPR_bac"/>
</dbReference>
<dbReference type="InterPro" id="IPR036291">
    <property type="entry name" value="NAD(P)-bd_dom_sf"/>
</dbReference>
<dbReference type="NCBIfam" id="TIGR00036">
    <property type="entry name" value="dapB"/>
    <property type="match status" value="1"/>
</dbReference>
<dbReference type="PANTHER" id="PTHR20836:SF0">
    <property type="entry name" value="4-HYDROXY-TETRAHYDRODIPICOLINATE REDUCTASE 1, CHLOROPLASTIC-RELATED"/>
    <property type="match status" value="1"/>
</dbReference>
<dbReference type="PANTHER" id="PTHR20836">
    <property type="entry name" value="DIHYDRODIPICOLINATE REDUCTASE"/>
    <property type="match status" value="1"/>
</dbReference>
<dbReference type="Pfam" id="PF05173">
    <property type="entry name" value="DapB_C"/>
    <property type="match status" value="1"/>
</dbReference>
<dbReference type="Pfam" id="PF01113">
    <property type="entry name" value="DapB_N"/>
    <property type="match status" value="1"/>
</dbReference>
<dbReference type="PIRSF" id="PIRSF000161">
    <property type="entry name" value="DHPR"/>
    <property type="match status" value="1"/>
</dbReference>
<dbReference type="SUPFAM" id="SSF55347">
    <property type="entry name" value="Glyceraldehyde-3-phosphate dehydrogenase-like, C-terminal domain"/>
    <property type="match status" value="1"/>
</dbReference>
<dbReference type="SUPFAM" id="SSF51735">
    <property type="entry name" value="NAD(P)-binding Rossmann-fold domains"/>
    <property type="match status" value="1"/>
</dbReference>
<dbReference type="PROSITE" id="PS01298">
    <property type="entry name" value="DAPB"/>
    <property type="match status" value="1"/>
</dbReference>
<evidence type="ECO:0000255" key="1">
    <source>
        <dbReference type="HAMAP-Rule" id="MF_00102"/>
    </source>
</evidence>
<evidence type="ECO:0000305" key="2"/>
<accession>A5GSL5</accession>
<feature type="chain" id="PRO_1000008654" description="4-hydroxy-tetrahydrodipicolinate reductase">
    <location>
        <begin position="1"/>
        <end position="273"/>
    </location>
</feature>
<feature type="active site" description="Proton donor/acceptor" evidence="1">
    <location>
        <position position="162"/>
    </location>
</feature>
<feature type="active site" description="Proton donor" evidence="1">
    <location>
        <position position="166"/>
    </location>
</feature>
<feature type="binding site" evidence="1">
    <location>
        <begin position="11"/>
        <end position="16"/>
    </location>
    <ligand>
        <name>NAD(+)</name>
        <dbReference type="ChEBI" id="CHEBI:57540"/>
    </ligand>
</feature>
<feature type="binding site" evidence="1">
    <location>
        <begin position="106"/>
        <end position="108"/>
    </location>
    <ligand>
        <name>NAD(+)</name>
        <dbReference type="ChEBI" id="CHEBI:57540"/>
    </ligand>
</feature>
<feature type="binding site" evidence="1">
    <location>
        <position position="163"/>
    </location>
    <ligand>
        <name>(S)-2,3,4,5-tetrahydrodipicolinate</name>
        <dbReference type="ChEBI" id="CHEBI:16845"/>
    </ligand>
</feature>
<feature type="binding site" evidence="1">
    <location>
        <begin position="172"/>
        <end position="173"/>
    </location>
    <ligand>
        <name>(S)-2,3,4,5-tetrahydrodipicolinate</name>
        <dbReference type="ChEBI" id="CHEBI:16845"/>
    </ligand>
</feature>
<sequence>MTDQIPVVVAGALGRMGAEVIKAVHTAGDCQLVGAIDTCPGREGEDVGLALGLGELEVALTQDFEGALCLASQQHPGAVLVDFTHPKVVYEHTRAAIAYGVTPVIGTTGLAPEQLQELASFAAKASMGGAVIPNFSVGMVLLQQAAAAAARFYDHAELVELHHNRKADAPSGTCIKTAELMEELGKQFNAQEVEEHETLEGSRGGLRPSGLRLHSIRLPGLVAHQEVQFGGAGERYVLRHDTFDRAAYMPGVLLTVRKVRQLGALVYGLERLL</sequence>
<organism>
    <name type="scientific">Synechococcus sp. (strain RCC307)</name>
    <dbReference type="NCBI Taxonomy" id="316278"/>
    <lineage>
        <taxon>Bacteria</taxon>
        <taxon>Bacillati</taxon>
        <taxon>Cyanobacteriota</taxon>
        <taxon>Cyanophyceae</taxon>
        <taxon>Synechococcales</taxon>
        <taxon>Synechococcaceae</taxon>
        <taxon>Synechococcus</taxon>
    </lineage>
</organism>
<reference key="1">
    <citation type="submission" date="2006-05" db="EMBL/GenBank/DDBJ databases">
        <authorList>
            <consortium name="Genoscope"/>
        </authorList>
    </citation>
    <scope>NUCLEOTIDE SEQUENCE [LARGE SCALE GENOMIC DNA]</scope>
    <source>
        <strain>RCC307</strain>
    </source>
</reference>
<gene>
    <name evidence="1" type="primary">dapB</name>
    <name type="ordered locus">SynRCC307_0971</name>
</gene>
<name>DAPB_SYNR3</name>
<keyword id="KW-0028">Amino-acid biosynthesis</keyword>
<keyword id="KW-0963">Cytoplasm</keyword>
<keyword id="KW-0220">Diaminopimelate biosynthesis</keyword>
<keyword id="KW-0457">Lysine biosynthesis</keyword>
<keyword id="KW-0520">NAD</keyword>
<keyword id="KW-0521">NADP</keyword>
<keyword id="KW-0560">Oxidoreductase</keyword>
<keyword id="KW-1185">Reference proteome</keyword>
<protein>
    <recommendedName>
        <fullName evidence="1">4-hydroxy-tetrahydrodipicolinate reductase</fullName>
        <shortName evidence="1">HTPA reductase</shortName>
        <ecNumber evidence="1">1.17.1.8</ecNumber>
    </recommendedName>
</protein>
<proteinExistence type="inferred from homology"/>
<comment type="function">
    <text evidence="1">Catalyzes the conversion of 4-hydroxy-tetrahydrodipicolinate (HTPA) to tetrahydrodipicolinate.</text>
</comment>
<comment type="catalytic activity">
    <reaction evidence="1">
        <text>(S)-2,3,4,5-tetrahydrodipicolinate + NAD(+) + H2O = (2S,4S)-4-hydroxy-2,3,4,5-tetrahydrodipicolinate + NADH + H(+)</text>
        <dbReference type="Rhea" id="RHEA:35323"/>
        <dbReference type="ChEBI" id="CHEBI:15377"/>
        <dbReference type="ChEBI" id="CHEBI:15378"/>
        <dbReference type="ChEBI" id="CHEBI:16845"/>
        <dbReference type="ChEBI" id="CHEBI:57540"/>
        <dbReference type="ChEBI" id="CHEBI:57945"/>
        <dbReference type="ChEBI" id="CHEBI:67139"/>
        <dbReference type="EC" id="1.17.1.8"/>
    </reaction>
</comment>
<comment type="catalytic activity">
    <reaction evidence="1">
        <text>(S)-2,3,4,5-tetrahydrodipicolinate + NADP(+) + H2O = (2S,4S)-4-hydroxy-2,3,4,5-tetrahydrodipicolinate + NADPH + H(+)</text>
        <dbReference type="Rhea" id="RHEA:35331"/>
        <dbReference type="ChEBI" id="CHEBI:15377"/>
        <dbReference type="ChEBI" id="CHEBI:15378"/>
        <dbReference type="ChEBI" id="CHEBI:16845"/>
        <dbReference type="ChEBI" id="CHEBI:57783"/>
        <dbReference type="ChEBI" id="CHEBI:58349"/>
        <dbReference type="ChEBI" id="CHEBI:67139"/>
        <dbReference type="EC" id="1.17.1.8"/>
    </reaction>
</comment>
<comment type="pathway">
    <text evidence="1">Amino-acid biosynthesis; L-lysine biosynthesis via DAP pathway; (S)-tetrahydrodipicolinate from L-aspartate: step 4/4.</text>
</comment>
<comment type="subcellular location">
    <subcellularLocation>
        <location evidence="1">Cytoplasm</location>
    </subcellularLocation>
</comment>
<comment type="similarity">
    <text evidence="1">Belongs to the DapB family.</text>
</comment>
<comment type="caution">
    <text evidence="2">Was originally thought to be a dihydrodipicolinate reductase (DHDPR), catalyzing the conversion of dihydrodipicolinate to tetrahydrodipicolinate. However, it was shown in E.coli that the substrate of the enzymatic reaction is not dihydrodipicolinate (DHDP) but in fact (2S,4S)-4-hydroxy-2,3,4,5-tetrahydrodipicolinic acid (HTPA), the product released by the DapA-catalyzed reaction.</text>
</comment>